<name>METXA_HAEI8</name>
<protein>
    <recommendedName>
        <fullName evidence="1">Homoserine O-acetyltransferase</fullName>
        <shortName evidence="1">HAT</shortName>
        <ecNumber evidence="1">2.3.1.31</ecNumber>
    </recommendedName>
    <alternativeName>
        <fullName evidence="1">Homoserine transacetylase</fullName>
        <shortName evidence="1">HTA</shortName>
    </alternativeName>
</protein>
<evidence type="ECO:0000255" key="1">
    <source>
        <dbReference type="HAMAP-Rule" id="MF_00296"/>
    </source>
</evidence>
<keyword id="KW-0012">Acyltransferase</keyword>
<keyword id="KW-0028">Amino-acid biosynthesis</keyword>
<keyword id="KW-0963">Cytoplasm</keyword>
<keyword id="KW-0486">Methionine biosynthesis</keyword>
<keyword id="KW-0808">Transferase</keyword>
<proteinExistence type="inferred from homology"/>
<organism>
    <name type="scientific">Haemophilus influenzae (strain 86-028NP)</name>
    <dbReference type="NCBI Taxonomy" id="281310"/>
    <lineage>
        <taxon>Bacteria</taxon>
        <taxon>Pseudomonadati</taxon>
        <taxon>Pseudomonadota</taxon>
        <taxon>Gammaproteobacteria</taxon>
        <taxon>Pasteurellales</taxon>
        <taxon>Pasteurellaceae</taxon>
        <taxon>Haemophilus</taxon>
    </lineage>
</organism>
<accession>Q4QJY8</accession>
<comment type="function">
    <text evidence="1">Transfers an acetyl group from acetyl-CoA to L-homoserine, forming acetyl-L-homoserine.</text>
</comment>
<comment type="catalytic activity">
    <reaction evidence="1">
        <text>L-homoserine + acetyl-CoA = O-acetyl-L-homoserine + CoA</text>
        <dbReference type="Rhea" id="RHEA:13701"/>
        <dbReference type="ChEBI" id="CHEBI:57287"/>
        <dbReference type="ChEBI" id="CHEBI:57288"/>
        <dbReference type="ChEBI" id="CHEBI:57476"/>
        <dbReference type="ChEBI" id="CHEBI:57716"/>
        <dbReference type="EC" id="2.3.1.31"/>
    </reaction>
</comment>
<comment type="pathway">
    <text evidence="1">Amino-acid biosynthesis; L-methionine biosynthesis via de novo pathway; O-acetyl-L-homoserine from L-homoserine: step 1/1.</text>
</comment>
<comment type="subunit">
    <text evidence="1">Homodimer.</text>
</comment>
<comment type="subcellular location">
    <subcellularLocation>
        <location evidence="1">Cytoplasm</location>
    </subcellularLocation>
</comment>
<comment type="similarity">
    <text evidence="1">Belongs to the AB hydrolase superfamily. MetX family.</text>
</comment>
<feature type="chain" id="PRO_0000231872" description="Homoserine O-acetyltransferase">
    <location>
        <begin position="1"/>
        <end position="358"/>
    </location>
</feature>
<feature type="domain" description="AB hydrolase-1" evidence="1">
    <location>
        <begin position="41"/>
        <end position="343"/>
    </location>
</feature>
<feature type="active site" description="Nucleophile" evidence="1">
    <location>
        <position position="143"/>
    </location>
</feature>
<feature type="active site" evidence="1">
    <location>
        <position position="304"/>
    </location>
</feature>
<feature type="active site" evidence="1">
    <location>
        <position position="337"/>
    </location>
</feature>
<feature type="binding site" evidence="1">
    <location>
        <position position="212"/>
    </location>
    <ligand>
        <name>substrate</name>
    </ligand>
</feature>
<feature type="binding site" evidence="1">
    <location>
        <position position="338"/>
    </location>
    <ligand>
        <name>substrate</name>
    </ligand>
</feature>
<gene>
    <name evidence="1" type="primary">metXA</name>
    <name type="ordered locus">NTHI1901</name>
</gene>
<reference key="1">
    <citation type="journal article" date="2005" name="J. Bacteriol.">
        <title>Genomic sequence of an otitis media isolate of nontypeable Haemophilus influenzae: comparative study with H. influenzae serotype d, strain KW20.</title>
        <authorList>
            <person name="Harrison A."/>
            <person name="Dyer D.W."/>
            <person name="Gillaspy A."/>
            <person name="Ray W.C."/>
            <person name="Mungur R."/>
            <person name="Carson M.B."/>
            <person name="Zhong H."/>
            <person name="Gipson J."/>
            <person name="Gipson M."/>
            <person name="Johnson L.S."/>
            <person name="Lewis L."/>
            <person name="Bakaletz L.O."/>
            <person name="Munson R.S. Jr."/>
        </authorList>
    </citation>
    <scope>NUCLEOTIDE SEQUENCE [LARGE SCALE GENOMIC DNA]</scope>
    <source>
        <strain>86-028NP</strain>
    </source>
</reference>
<sequence>MSVQNVVLFDTQPLTLMLGGKLSHINVAYQTYGTLNAEKNNAVLICHALTGDAEPYFDDGRDGWWQNFMGAGLALDTDRYFFISSNVLGGCKGTTGPSSINPQTGKPYGSQFPNIVVQDIVKVQKALLEHLGISHLKAIIGGSFGGMQANQWAIDYPDFMDNIVNLCSSIYFSAEAIGFNHVMRQAVINDPNFNGGDYYEGTPPDQGLSIARMLGMLTYRTDLQLAKAFGRATKSDGSFWGDYFQVESYLSYQGKKFLERFDANSYLHLLRALDMYDPSLGYENVKEALSRIKARYTLVSVTTDQLFKPIDLYKSKQLLEQSGVDLHFYEFPSDYGHDAFLVDYDQFEKRIRDGLAGN</sequence>
<dbReference type="EC" id="2.3.1.31" evidence="1"/>
<dbReference type="EMBL" id="CP000057">
    <property type="protein sequence ID" value="AAX88659.1"/>
    <property type="molecule type" value="Genomic_DNA"/>
</dbReference>
<dbReference type="RefSeq" id="WP_005689855.1">
    <property type="nucleotide sequence ID" value="NC_007146.2"/>
</dbReference>
<dbReference type="SMR" id="Q4QJY8"/>
<dbReference type="ESTHER" id="haein-metx">
    <property type="family name" value="Homoserine_transacetylase"/>
</dbReference>
<dbReference type="GeneID" id="93220605"/>
<dbReference type="KEGG" id="hit:NTHI1901"/>
<dbReference type="HOGENOM" id="CLU_028760_1_2_6"/>
<dbReference type="UniPathway" id="UPA00051">
    <property type="reaction ID" value="UER00074"/>
</dbReference>
<dbReference type="Proteomes" id="UP000002525">
    <property type="component" value="Chromosome"/>
</dbReference>
<dbReference type="GO" id="GO:0005737">
    <property type="term" value="C:cytoplasm"/>
    <property type="evidence" value="ECO:0007669"/>
    <property type="project" value="UniProtKB-SubCell"/>
</dbReference>
<dbReference type="GO" id="GO:0004414">
    <property type="term" value="F:homoserine O-acetyltransferase activity"/>
    <property type="evidence" value="ECO:0007669"/>
    <property type="project" value="UniProtKB-UniRule"/>
</dbReference>
<dbReference type="GO" id="GO:0009092">
    <property type="term" value="P:homoserine metabolic process"/>
    <property type="evidence" value="ECO:0007669"/>
    <property type="project" value="TreeGrafter"/>
</dbReference>
<dbReference type="GO" id="GO:0009086">
    <property type="term" value="P:methionine biosynthetic process"/>
    <property type="evidence" value="ECO:0007669"/>
    <property type="project" value="UniProtKB-UniRule"/>
</dbReference>
<dbReference type="FunFam" id="1.10.1740.110:FF:000001">
    <property type="entry name" value="Homoserine O-acetyltransferase"/>
    <property type="match status" value="1"/>
</dbReference>
<dbReference type="Gene3D" id="1.10.1740.110">
    <property type="match status" value="1"/>
</dbReference>
<dbReference type="Gene3D" id="3.40.50.1820">
    <property type="entry name" value="alpha/beta hydrolase"/>
    <property type="match status" value="1"/>
</dbReference>
<dbReference type="HAMAP" id="MF_00296">
    <property type="entry name" value="MetX_acyltransf"/>
    <property type="match status" value="1"/>
</dbReference>
<dbReference type="InterPro" id="IPR000073">
    <property type="entry name" value="AB_hydrolase_1"/>
</dbReference>
<dbReference type="InterPro" id="IPR029058">
    <property type="entry name" value="AB_hydrolase_fold"/>
</dbReference>
<dbReference type="InterPro" id="IPR008220">
    <property type="entry name" value="HAT_MetX-like"/>
</dbReference>
<dbReference type="NCBIfam" id="TIGR01392">
    <property type="entry name" value="homoserO_Ac_trn"/>
    <property type="match status" value="1"/>
</dbReference>
<dbReference type="NCBIfam" id="NF001209">
    <property type="entry name" value="PRK00175.1"/>
    <property type="match status" value="1"/>
</dbReference>
<dbReference type="PANTHER" id="PTHR32268">
    <property type="entry name" value="HOMOSERINE O-ACETYLTRANSFERASE"/>
    <property type="match status" value="1"/>
</dbReference>
<dbReference type="PANTHER" id="PTHR32268:SF11">
    <property type="entry name" value="HOMOSERINE O-ACETYLTRANSFERASE"/>
    <property type="match status" value="1"/>
</dbReference>
<dbReference type="Pfam" id="PF00561">
    <property type="entry name" value="Abhydrolase_1"/>
    <property type="match status" value="1"/>
</dbReference>
<dbReference type="PIRSF" id="PIRSF000443">
    <property type="entry name" value="Homoser_Ac_trans"/>
    <property type="match status" value="1"/>
</dbReference>
<dbReference type="SUPFAM" id="SSF53474">
    <property type="entry name" value="alpha/beta-Hydrolases"/>
    <property type="match status" value="1"/>
</dbReference>